<gene>
    <name evidence="1" type="primary">metK</name>
    <name type="ordered locus">MS0669</name>
</gene>
<feature type="chain" id="PRO_0000174546" description="S-adenosylmethionine synthase">
    <location>
        <begin position="1"/>
        <end position="383"/>
    </location>
</feature>
<feature type="region of interest" description="Flexible loop" evidence="1">
    <location>
        <begin position="99"/>
        <end position="109"/>
    </location>
</feature>
<feature type="binding site" description="in other chain" evidence="1">
    <location>
        <position position="15"/>
    </location>
    <ligand>
        <name>ATP</name>
        <dbReference type="ChEBI" id="CHEBI:30616"/>
        <note>ligand shared between two neighboring subunits</note>
    </ligand>
</feature>
<feature type="binding site" evidence="1">
    <location>
        <position position="17"/>
    </location>
    <ligand>
        <name>Mg(2+)</name>
        <dbReference type="ChEBI" id="CHEBI:18420"/>
    </ligand>
</feature>
<feature type="binding site" evidence="1">
    <location>
        <position position="43"/>
    </location>
    <ligand>
        <name>K(+)</name>
        <dbReference type="ChEBI" id="CHEBI:29103"/>
    </ligand>
</feature>
<feature type="binding site" description="in other chain" evidence="1">
    <location>
        <position position="56"/>
    </location>
    <ligand>
        <name>L-methionine</name>
        <dbReference type="ChEBI" id="CHEBI:57844"/>
        <note>ligand shared between two neighboring subunits</note>
    </ligand>
</feature>
<feature type="binding site" description="in other chain" evidence="1">
    <location>
        <position position="99"/>
    </location>
    <ligand>
        <name>L-methionine</name>
        <dbReference type="ChEBI" id="CHEBI:57844"/>
        <note>ligand shared between two neighboring subunits</note>
    </ligand>
</feature>
<feature type="binding site" description="in other chain" evidence="1">
    <location>
        <begin position="164"/>
        <end position="166"/>
    </location>
    <ligand>
        <name>ATP</name>
        <dbReference type="ChEBI" id="CHEBI:30616"/>
        <note>ligand shared between two neighboring subunits</note>
    </ligand>
</feature>
<feature type="binding site" description="in other chain" evidence="1">
    <location>
        <begin position="230"/>
        <end position="231"/>
    </location>
    <ligand>
        <name>ATP</name>
        <dbReference type="ChEBI" id="CHEBI:30616"/>
        <note>ligand shared between two neighboring subunits</note>
    </ligand>
</feature>
<feature type="binding site" evidence="1">
    <location>
        <position position="239"/>
    </location>
    <ligand>
        <name>ATP</name>
        <dbReference type="ChEBI" id="CHEBI:30616"/>
        <note>ligand shared between two neighboring subunits</note>
    </ligand>
</feature>
<feature type="binding site" evidence="1">
    <location>
        <position position="239"/>
    </location>
    <ligand>
        <name>L-methionine</name>
        <dbReference type="ChEBI" id="CHEBI:57844"/>
        <note>ligand shared between two neighboring subunits</note>
    </ligand>
</feature>
<feature type="binding site" description="in other chain" evidence="1">
    <location>
        <begin position="245"/>
        <end position="246"/>
    </location>
    <ligand>
        <name>ATP</name>
        <dbReference type="ChEBI" id="CHEBI:30616"/>
        <note>ligand shared between two neighboring subunits</note>
    </ligand>
</feature>
<feature type="binding site" evidence="1">
    <location>
        <position position="262"/>
    </location>
    <ligand>
        <name>ATP</name>
        <dbReference type="ChEBI" id="CHEBI:30616"/>
        <note>ligand shared between two neighboring subunits</note>
    </ligand>
</feature>
<feature type="binding site" evidence="1">
    <location>
        <position position="266"/>
    </location>
    <ligand>
        <name>ATP</name>
        <dbReference type="ChEBI" id="CHEBI:30616"/>
        <note>ligand shared between two neighboring subunits</note>
    </ligand>
</feature>
<feature type="binding site" description="in other chain" evidence="1">
    <location>
        <position position="270"/>
    </location>
    <ligand>
        <name>L-methionine</name>
        <dbReference type="ChEBI" id="CHEBI:57844"/>
        <note>ligand shared between two neighboring subunits</note>
    </ligand>
</feature>
<dbReference type="EC" id="2.5.1.6" evidence="1"/>
<dbReference type="EMBL" id="AE016827">
    <property type="protein sequence ID" value="AAU37276.1"/>
    <property type="molecule type" value="Genomic_DNA"/>
</dbReference>
<dbReference type="RefSeq" id="WP_011199848.1">
    <property type="nucleotide sequence ID" value="NC_006300.1"/>
</dbReference>
<dbReference type="SMR" id="Q65UT4"/>
<dbReference type="STRING" id="221988.MS0669"/>
<dbReference type="KEGG" id="msu:MS0669"/>
<dbReference type="eggNOG" id="COG0192">
    <property type="taxonomic scope" value="Bacteria"/>
</dbReference>
<dbReference type="HOGENOM" id="CLU_041802_1_1_6"/>
<dbReference type="OrthoDB" id="9801686at2"/>
<dbReference type="UniPathway" id="UPA00315">
    <property type="reaction ID" value="UER00080"/>
</dbReference>
<dbReference type="Proteomes" id="UP000000607">
    <property type="component" value="Chromosome"/>
</dbReference>
<dbReference type="GO" id="GO:0005737">
    <property type="term" value="C:cytoplasm"/>
    <property type="evidence" value="ECO:0007669"/>
    <property type="project" value="UniProtKB-SubCell"/>
</dbReference>
<dbReference type="GO" id="GO:0005524">
    <property type="term" value="F:ATP binding"/>
    <property type="evidence" value="ECO:0007669"/>
    <property type="project" value="UniProtKB-UniRule"/>
</dbReference>
<dbReference type="GO" id="GO:0000287">
    <property type="term" value="F:magnesium ion binding"/>
    <property type="evidence" value="ECO:0007669"/>
    <property type="project" value="UniProtKB-UniRule"/>
</dbReference>
<dbReference type="GO" id="GO:0004478">
    <property type="term" value="F:methionine adenosyltransferase activity"/>
    <property type="evidence" value="ECO:0007669"/>
    <property type="project" value="UniProtKB-UniRule"/>
</dbReference>
<dbReference type="GO" id="GO:0006730">
    <property type="term" value="P:one-carbon metabolic process"/>
    <property type="evidence" value="ECO:0007669"/>
    <property type="project" value="UniProtKB-KW"/>
</dbReference>
<dbReference type="GO" id="GO:0006556">
    <property type="term" value="P:S-adenosylmethionine biosynthetic process"/>
    <property type="evidence" value="ECO:0007669"/>
    <property type="project" value="UniProtKB-UniRule"/>
</dbReference>
<dbReference type="CDD" id="cd18079">
    <property type="entry name" value="S-AdoMet_synt"/>
    <property type="match status" value="1"/>
</dbReference>
<dbReference type="FunFam" id="3.30.300.10:FF:000003">
    <property type="entry name" value="S-adenosylmethionine synthase"/>
    <property type="match status" value="1"/>
</dbReference>
<dbReference type="FunFam" id="3.30.300.10:FF:000004">
    <property type="entry name" value="S-adenosylmethionine synthase"/>
    <property type="match status" value="1"/>
</dbReference>
<dbReference type="Gene3D" id="3.30.300.10">
    <property type="match status" value="3"/>
</dbReference>
<dbReference type="HAMAP" id="MF_00086">
    <property type="entry name" value="S_AdoMet_synth1"/>
    <property type="match status" value="1"/>
</dbReference>
<dbReference type="InterPro" id="IPR022631">
    <property type="entry name" value="ADOMET_SYNTHASE_CS"/>
</dbReference>
<dbReference type="InterPro" id="IPR022630">
    <property type="entry name" value="S-AdoMet_synt_C"/>
</dbReference>
<dbReference type="InterPro" id="IPR022629">
    <property type="entry name" value="S-AdoMet_synt_central"/>
</dbReference>
<dbReference type="InterPro" id="IPR022628">
    <property type="entry name" value="S-AdoMet_synt_N"/>
</dbReference>
<dbReference type="InterPro" id="IPR002133">
    <property type="entry name" value="S-AdoMet_synthetase"/>
</dbReference>
<dbReference type="InterPro" id="IPR022636">
    <property type="entry name" value="S-AdoMet_synthetase_sfam"/>
</dbReference>
<dbReference type="NCBIfam" id="TIGR01034">
    <property type="entry name" value="metK"/>
    <property type="match status" value="1"/>
</dbReference>
<dbReference type="PANTHER" id="PTHR11964">
    <property type="entry name" value="S-ADENOSYLMETHIONINE SYNTHETASE"/>
    <property type="match status" value="1"/>
</dbReference>
<dbReference type="Pfam" id="PF02773">
    <property type="entry name" value="S-AdoMet_synt_C"/>
    <property type="match status" value="1"/>
</dbReference>
<dbReference type="Pfam" id="PF02772">
    <property type="entry name" value="S-AdoMet_synt_M"/>
    <property type="match status" value="1"/>
</dbReference>
<dbReference type="Pfam" id="PF00438">
    <property type="entry name" value="S-AdoMet_synt_N"/>
    <property type="match status" value="1"/>
</dbReference>
<dbReference type="PIRSF" id="PIRSF000497">
    <property type="entry name" value="MAT"/>
    <property type="match status" value="1"/>
</dbReference>
<dbReference type="SUPFAM" id="SSF55973">
    <property type="entry name" value="S-adenosylmethionine synthetase"/>
    <property type="match status" value="3"/>
</dbReference>
<dbReference type="PROSITE" id="PS00376">
    <property type="entry name" value="ADOMET_SYNTHASE_1"/>
    <property type="match status" value="1"/>
</dbReference>
<dbReference type="PROSITE" id="PS00377">
    <property type="entry name" value="ADOMET_SYNTHASE_2"/>
    <property type="match status" value="1"/>
</dbReference>
<sequence length="383" mass="41689">MSSYLFTSESVSEGHPDKIADQISDAVLDEILKQDPKARVACETYVKTGMALVGGEITTSAWVDIEYIARQVICDIGYTSSEMGFDGHSCAVLNGIGKQSSDINQGVDRDDPLNQGAGDQGIMFGYATNETEVLMPAAITYAHRLMERQAWVRKNGTLPWLRPDAKSQVTLKYENNKIVGVDAVVLSTQHSDSVTQEDLHEAVMEEIIKPVLPAKWLSKDTKYFINPTGRFVIGGPMGDCGLTGRKIIVDTYGGAARHGGGAFSGKDPSKVDRSAAYAARYVAKNIVAAGLADRCEIQLSYAIGVAEPTSIMVETFGTGKVADELLVALVREHFDLRPYGLIKMLDLIKPIYRETAAYGHFGREQFPWEKTDRAAELKAAAGL</sequence>
<organism>
    <name type="scientific">Mannheimia succiniciproducens (strain KCTC 0769BP / MBEL55E)</name>
    <dbReference type="NCBI Taxonomy" id="221988"/>
    <lineage>
        <taxon>Bacteria</taxon>
        <taxon>Pseudomonadati</taxon>
        <taxon>Pseudomonadota</taxon>
        <taxon>Gammaproteobacteria</taxon>
        <taxon>Pasteurellales</taxon>
        <taxon>Pasteurellaceae</taxon>
        <taxon>Basfia</taxon>
    </lineage>
</organism>
<protein>
    <recommendedName>
        <fullName evidence="1">S-adenosylmethionine synthase</fullName>
        <shortName evidence="1">AdoMet synthase</shortName>
        <ecNumber evidence="1">2.5.1.6</ecNumber>
    </recommendedName>
    <alternativeName>
        <fullName evidence="1">MAT</fullName>
    </alternativeName>
    <alternativeName>
        <fullName evidence="1">Methionine adenosyltransferase</fullName>
    </alternativeName>
</protein>
<comment type="function">
    <text evidence="1">Catalyzes the formation of S-adenosylmethionine (AdoMet) from methionine and ATP. The overall synthetic reaction is composed of two sequential steps, AdoMet formation and the subsequent tripolyphosphate hydrolysis which occurs prior to release of AdoMet from the enzyme.</text>
</comment>
<comment type="catalytic activity">
    <reaction evidence="1">
        <text>L-methionine + ATP + H2O = S-adenosyl-L-methionine + phosphate + diphosphate</text>
        <dbReference type="Rhea" id="RHEA:21080"/>
        <dbReference type="ChEBI" id="CHEBI:15377"/>
        <dbReference type="ChEBI" id="CHEBI:30616"/>
        <dbReference type="ChEBI" id="CHEBI:33019"/>
        <dbReference type="ChEBI" id="CHEBI:43474"/>
        <dbReference type="ChEBI" id="CHEBI:57844"/>
        <dbReference type="ChEBI" id="CHEBI:59789"/>
        <dbReference type="EC" id="2.5.1.6"/>
    </reaction>
</comment>
<comment type="cofactor">
    <cofactor evidence="1">
        <name>Mg(2+)</name>
        <dbReference type="ChEBI" id="CHEBI:18420"/>
    </cofactor>
    <text evidence="1">Binds 2 divalent ions per subunit.</text>
</comment>
<comment type="cofactor">
    <cofactor evidence="1">
        <name>K(+)</name>
        <dbReference type="ChEBI" id="CHEBI:29103"/>
    </cofactor>
    <text evidence="1">Binds 1 potassium ion per subunit.</text>
</comment>
<comment type="pathway">
    <text evidence="1">Amino-acid biosynthesis; S-adenosyl-L-methionine biosynthesis; S-adenosyl-L-methionine from L-methionine: step 1/1.</text>
</comment>
<comment type="subunit">
    <text evidence="1">Homotetramer; dimer of dimers.</text>
</comment>
<comment type="subcellular location">
    <subcellularLocation>
        <location evidence="1">Cytoplasm</location>
    </subcellularLocation>
</comment>
<comment type="similarity">
    <text evidence="1">Belongs to the AdoMet synthase family.</text>
</comment>
<proteinExistence type="inferred from homology"/>
<accession>Q65UT4</accession>
<name>METK_MANSM</name>
<evidence type="ECO:0000255" key="1">
    <source>
        <dbReference type="HAMAP-Rule" id="MF_00086"/>
    </source>
</evidence>
<keyword id="KW-0067">ATP-binding</keyword>
<keyword id="KW-0963">Cytoplasm</keyword>
<keyword id="KW-0460">Magnesium</keyword>
<keyword id="KW-0479">Metal-binding</keyword>
<keyword id="KW-0547">Nucleotide-binding</keyword>
<keyword id="KW-0554">One-carbon metabolism</keyword>
<keyword id="KW-0630">Potassium</keyword>
<keyword id="KW-0808">Transferase</keyword>
<reference key="1">
    <citation type="journal article" date="2004" name="Nat. Biotechnol.">
        <title>The genome sequence of the capnophilic rumen bacterium Mannheimia succiniciproducens.</title>
        <authorList>
            <person name="Hong S.H."/>
            <person name="Kim J.S."/>
            <person name="Lee S.Y."/>
            <person name="In Y.H."/>
            <person name="Choi S.S."/>
            <person name="Rih J.-K."/>
            <person name="Kim C.H."/>
            <person name="Jeong H."/>
            <person name="Hur C.G."/>
            <person name="Kim J.J."/>
        </authorList>
    </citation>
    <scope>NUCLEOTIDE SEQUENCE [LARGE SCALE GENOMIC DNA]</scope>
    <source>
        <strain>KCTC 0769BP / MBEL55E</strain>
    </source>
</reference>